<evidence type="ECO:0000255" key="1">
    <source>
        <dbReference type="HAMAP-Rule" id="MF_03027"/>
    </source>
</evidence>
<evidence type="ECO:0000256" key="2">
    <source>
        <dbReference type="SAM" id="MobiDB-lite"/>
    </source>
</evidence>
<proteinExistence type="inferred from homology"/>
<organism>
    <name type="scientific">Pyrenophora tritici-repentis (strain Pt-1C-BFP)</name>
    <name type="common">Wheat tan spot fungus</name>
    <name type="synonym">Drechslera tritici-repentis</name>
    <dbReference type="NCBI Taxonomy" id="426418"/>
    <lineage>
        <taxon>Eukaryota</taxon>
        <taxon>Fungi</taxon>
        <taxon>Dikarya</taxon>
        <taxon>Ascomycota</taxon>
        <taxon>Pezizomycotina</taxon>
        <taxon>Dothideomycetes</taxon>
        <taxon>Pleosporomycetidae</taxon>
        <taxon>Pleosporales</taxon>
        <taxon>Pleosporineae</taxon>
        <taxon>Pleosporaceae</taxon>
        <taxon>Pyrenophora</taxon>
    </lineage>
</organism>
<reference key="1">
    <citation type="journal article" date="2013" name="G3 (Bethesda)">
        <title>Comparative genomics of a plant-pathogenic fungus, Pyrenophora tritici-repentis, reveals transduplication and the impact of repeat elements on pathogenicity and population divergence.</title>
        <authorList>
            <person name="Manning V.A."/>
            <person name="Pandelova I."/>
            <person name="Dhillon B."/>
            <person name="Wilhelm L.J."/>
            <person name="Goodwin S.B."/>
            <person name="Berlin A.M."/>
            <person name="Figueroa M."/>
            <person name="Freitag M."/>
            <person name="Hane J.K."/>
            <person name="Henrissat B."/>
            <person name="Holman W.H."/>
            <person name="Kodira C.D."/>
            <person name="Martin J."/>
            <person name="Oliver R.P."/>
            <person name="Robbertse B."/>
            <person name="Schackwitz W."/>
            <person name="Schwartz D.C."/>
            <person name="Spatafora J.W."/>
            <person name="Turgeon B.G."/>
            <person name="Yandava C."/>
            <person name="Young S."/>
            <person name="Zhou S."/>
            <person name="Zeng Q."/>
            <person name="Grigoriev I.V."/>
            <person name="Ma L.-J."/>
            <person name="Ciuffetti L.M."/>
        </authorList>
    </citation>
    <scope>NUCLEOTIDE SEQUENCE [LARGE SCALE GENOMIC DNA]</scope>
    <source>
        <strain>Pt-1C-BFP</strain>
    </source>
</reference>
<keyword id="KW-0539">Nucleus</keyword>
<keyword id="KW-1185">Reference proteome</keyword>
<keyword id="KW-0677">Repeat</keyword>
<keyword id="KW-0690">Ribosome biogenesis</keyword>
<keyword id="KW-0698">rRNA processing</keyword>
<keyword id="KW-0853">WD repeat</keyword>
<sequence>MSVNPRKRKVVTRPAPEPSDSEGELGDGLLEGILSHSEDDSDNSREEEVDTDASSVIEGLSDEDEEEDEDSDSEQIRTEMRNLNTSDGPLRKKKGVPTHDMDLDTAVTEELEDDEDLKPNYTVTTDAHGNTRYIYKEIDPVYESDDSDVEATNTIGNIDLKYYDEYPHIGYDINGKKIMRPAKGEALDALLDSIDIPKGWTGLTDPQTGKPLNLSEEELDVLKRLTRNEVVEDGYDPYPEMVAYFSGKQEIMPLSAAPEPKRRFIPSKHEAKRVMKLVKAIREGRIQPYRAPEEQEEEQDAFNFDVWADEKPRPDNSMHIPAPKLPPPGYEASYHPPPEYLPDKAEEQAWLEADEEDREREFLPKNYDALRKVPGYETFVKERFERSLDLYLAPRIRRNRLNIDPESLLPKLPNPEDLKPFPTTCAAIFRGQEGRVRCVSIDPNGIFVASGGDDGYVRIWELLTGRQVWNAKLSDEEAVDAVQWRPKKDASVVAAACGENVFLIVPFTLLSPDVEQASREVLDAGWGYATSKPSTSSNGEAPKQAPGKWSRPGARLENKGVLVQVEVRSAVKIVNWHRRGDYFATVSPRGQSTAVAIHTVSKHLTQLPFRRLKGIAQTAQFHPSKAIFFVATRNTIRSYDLAKQELVKILQPGAKWISSIDVHPGGDNLIVGTYDKRLLWHDLDLSNKPYKTLRFHKEAIRAVRFHQGGLPLFADTSDDGTIQIFHGKVVGDLMENATIVPLKVLKGHKVRSRLGVMGLDWHPKEPWCVSAGADGTLRLWS</sequence>
<dbReference type="EMBL" id="DS231615">
    <property type="protein sequence ID" value="EDU39941.1"/>
    <property type="molecule type" value="Genomic_DNA"/>
</dbReference>
<dbReference type="RefSeq" id="XP_001930836.1">
    <property type="nucleotide sequence ID" value="XM_001930801.1"/>
</dbReference>
<dbReference type="SMR" id="B2VR76"/>
<dbReference type="FunCoup" id="B2VR76">
    <property type="interactions" value="991"/>
</dbReference>
<dbReference type="STRING" id="426418.B2VR76"/>
<dbReference type="EnsemblFungi" id="EDU39941">
    <property type="protein sequence ID" value="EDU39941"/>
    <property type="gene ID" value="PTRG_00503"/>
</dbReference>
<dbReference type="GeneID" id="6338364"/>
<dbReference type="KEGG" id="ptrr:6338364"/>
<dbReference type="eggNOG" id="KOG0650">
    <property type="taxonomic scope" value="Eukaryota"/>
</dbReference>
<dbReference type="HOGENOM" id="CLU_011390_0_1_1"/>
<dbReference type="InParanoid" id="B2VR76"/>
<dbReference type="OMA" id="MRPAKGE"/>
<dbReference type="OrthoDB" id="13581at28556"/>
<dbReference type="Proteomes" id="UP000001471">
    <property type="component" value="Unassembled WGS sequence"/>
</dbReference>
<dbReference type="GO" id="GO:0005654">
    <property type="term" value="C:nucleoplasm"/>
    <property type="evidence" value="ECO:0007669"/>
    <property type="project" value="UniProtKB-SubCell"/>
</dbReference>
<dbReference type="GO" id="GO:0070545">
    <property type="term" value="C:PeBoW complex"/>
    <property type="evidence" value="ECO:0007669"/>
    <property type="project" value="EnsemblFungi"/>
</dbReference>
<dbReference type="GO" id="GO:0030687">
    <property type="term" value="C:preribosome, large subunit precursor"/>
    <property type="evidence" value="ECO:0007669"/>
    <property type="project" value="UniProtKB-UniRule"/>
</dbReference>
<dbReference type="GO" id="GO:0070180">
    <property type="term" value="F:large ribosomal subunit rRNA binding"/>
    <property type="evidence" value="ECO:0007669"/>
    <property type="project" value="EnsemblFungi"/>
</dbReference>
<dbReference type="GO" id="GO:0043021">
    <property type="term" value="F:ribonucleoprotein complex binding"/>
    <property type="evidence" value="ECO:0007669"/>
    <property type="project" value="UniProtKB-UniRule"/>
</dbReference>
<dbReference type="GO" id="GO:0000466">
    <property type="term" value="P:maturation of 5.8S rRNA from tricistronic rRNA transcript (SSU-rRNA, 5.8S rRNA, LSU-rRNA)"/>
    <property type="evidence" value="ECO:0007669"/>
    <property type="project" value="UniProtKB-UniRule"/>
</dbReference>
<dbReference type="GO" id="GO:0000463">
    <property type="term" value="P:maturation of LSU-rRNA from tricistronic rRNA transcript (SSU-rRNA, 5.8S rRNA, LSU-rRNA)"/>
    <property type="evidence" value="ECO:0007669"/>
    <property type="project" value="UniProtKB-UniRule"/>
</dbReference>
<dbReference type="FunFam" id="2.130.10.10:FF:000061">
    <property type="entry name" value="Ribosome biogenesis protein BOP1 homolog"/>
    <property type="match status" value="1"/>
</dbReference>
<dbReference type="Gene3D" id="2.130.10.10">
    <property type="entry name" value="YVTN repeat-like/Quinoprotein amine dehydrogenase"/>
    <property type="match status" value="1"/>
</dbReference>
<dbReference type="HAMAP" id="MF_03027">
    <property type="entry name" value="BOP1"/>
    <property type="match status" value="1"/>
</dbReference>
<dbReference type="InterPro" id="IPR028598">
    <property type="entry name" value="BOP1/Erb1"/>
</dbReference>
<dbReference type="InterPro" id="IPR012953">
    <property type="entry name" value="BOP1_N_dom"/>
</dbReference>
<dbReference type="InterPro" id="IPR015943">
    <property type="entry name" value="WD40/YVTN_repeat-like_dom_sf"/>
</dbReference>
<dbReference type="InterPro" id="IPR019775">
    <property type="entry name" value="WD40_repeat_CS"/>
</dbReference>
<dbReference type="InterPro" id="IPR036322">
    <property type="entry name" value="WD40_repeat_dom_sf"/>
</dbReference>
<dbReference type="InterPro" id="IPR001680">
    <property type="entry name" value="WD40_rpt"/>
</dbReference>
<dbReference type="PANTHER" id="PTHR17605:SF0">
    <property type="entry name" value="RIBOSOME BIOGENESIS PROTEIN BOP1"/>
    <property type="match status" value="1"/>
</dbReference>
<dbReference type="PANTHER" id="PTHR17605">
    <property type="entry name" value="RIBOSOME BIOGENESIS PROTEIN BOP1 BLOCK OF PROLIFERATION 1 PROTEIN"/>
    <property type="match status" value="1"/>
</dbReference>
<dbReference type="Pfam" id="PF08145">
    <property type="entry name" value="BOP1NT"/>
    <property type="match status" value="1"/>
</dbReference>
<dbReference type="Pfam" id="PF00400">
    <property type="entry name" value="WD40"/>
    <property type="match status" value="3"/>
</dbReference>
<dbReference type="SMART" id="SM01035">
    <property type="entry name" value="BOP1NT"/>
    <property type="match status" value="1"/>
</dbReference>
<dbReference type="SMART" id="SM00320">
    <property type="entry name" value="WD40"/>
    <property type="match status" value="4"/>
</dbReference>
<dbReference type="SUPFAM" id="SSF50978">
    <property type="entry name" value="WD40 repeat-like"/>
    <property type="match status" value="1"/>
</dbReference>
<dbReference type="PROSITE" id="PS00678">
    <property type="entry name" value="WD_REPEATS_1"/>
    <property type="match status" value="1"/>
</dbReference>
<dbReference type="PROSITE" id="PS50082">
    <property type="entry name" value="WD_REPEATS_2"/>
    <property type="match status" value="2"/>
</dbReference>
<dbReference type="PROSITE" id="PS50294">
    <property type="entry name" value="WD_REPEATS_REGION"/>
    <property type="match status" value="2"/>
</dbReference>
<accession>B2VR76</accession>
<name>ERB1_PYRTR</name>
<protein>
    <recommendedName>
        <fullName evidence="1">Ribosome biogenesis protein erb1</fullName>
    </recommendedName>
    <alternativeName>
        <fullName evidence="1">Eukaryotic ribosome biogenesis protein 1</fullName>
    </alternativeName>
</protein>
<feature type="chain" id="PRO_0000370441" description="Ribosome biogenesis protein erb1">
    <location>
        <begin position="1"/>
        <end position="781"/>
    </location>
</feature>
<feature type="repeat" description="WD 1">
    <location>
        <begin position="431"/>
        <end position="470"/>
    </location>
</feature>
<feature type="repeat" description="WD 2">
    <location>
        <begin position="474"/>
        <end position="515"/>
    </location>
</feature>
<feature type="repeat" description="WD 3">
    <location>
        <begin position="611"/>
        <end position="651"/>
    </location>
</feature>
<feature type="repeat" description="WD 4">
    <location>
        <begin position="652"/>
        <end position="691"/>
    </location>
</feature>
<feature type="repeat" description="WD 5">
    <location>
        <begin position="695"/>
        <end position="735"/>
    </location>
</feature>
<feature type="repeat" description="WD 6">
    <location>
        <begin position="751"/>
        <end position="781"/>
    </location>
</feature>
<feature type="region of interest" description="Disordered" evidence="2">
    <location>
        <begin position="1"/>
        <end position="103"/>
    </location>
</feature>
<feature type="region of interest" description="Disordered" evidence="2">
    <location>
        <begin position="529"/>
        <end position="553"/>
    </location>
</feature>
<feature type="compositionally biased region" description="Basic residues" evidence="2">
    <location>
        <begin position="1"/>
        <end position="11"/>
    </location>
</feature>
<feature type="compositionally biased region" description="Basic and acidic residues" evidence="2">
    <location>
        <begin position="36"/>
        <end position="46"/>
    </location>
</feature>
<feature type="compositionally biased region" description="Acidic residues" evidence="2">
    <location>
        <begin position="60"/>
        <end position="73"/>
    </location>
</feature>
<comment type="function">
    <text evidence="1">Component of the NOP7 complex, which is required for maturation of the 25S and 5.8S ribosomal RNAs and formation of the 60S ribosome.</text>
</comment>
<comment type="subunit">
    <text evidence="1">Component of the NOP7 complex, composed of erb1, nop7 and ytm1. The complex is held together by erb1, which interacts with nop7 via its N-terminal domain and with ytm1 via a high-affinity interaction between the seven-bladed beta-propeller domains of the 2 proteins. The NOP7 complex associates with the 66S pre-ribosome.</text>
</comment>
<comment type="subcellular location">
    <subcellularLocation>
        <location evidence="1">Nucleus</location>
        <location evidence="1">Nucleolus</location>
    </subcellularLocation>
    <subcellularLocation>
        <location evidence="1">Nucleus</location>
        <location evidence="1">Nucleoplasm</location>
    </subcellularLocation>
</comment>
<comment type="similarity">
    <text evidence="1">Belongs to the WD repeat BOP1/ERB1 family.</text>
</comment>
<gene>
    <name type="primary">erb1</name>
    <name type="ORF">PTRG_00503</name>
</gene>